<sequence>MPSVSRAVCVQRASGNNGRRCRDGAAAAGRRSVVAQRARHGKPEVAIRSGSGGSARGGHCSPLRAVAAPIPTTKKRVFHFGKGKSEGNKAMKDLLGGKGANLAEMASIGLSVPPGFTVSTEACQQYQAAGKTLPAGLWEEIVEGLQWVEEYMAARLGDPARPLLLSVRSGAAVSMPGMMDTVLNLGLNDEVAAGLAAKSGDRFAYDSYRRFLDMFGNVVMDIPHALFEEKLEAMKAVKGLHNDTDLTATDLKELVAQYKDVYVEAKGEPFPSDPKKQLQLAVLAVFNSWDSPRAIKYRSINKITGLKGTAVNVQTMVFGNMGNTSGTGVLFTRNPSTGEKKLYGEFLVNAQGEDVVAGIRTPEDLDAMRDHMPEPYEELVENCKILESHYKEMMDIEFTVQENRLWMLQCRTGKRTGKGAVKIAVDMVNEGLVERRTALKMVEPGHLDQLLHPQFENPSGYKDKVIATGLPASPGAAVGQIVFTAEDAEAWHAQGKDVILVRTETSPEDVGGMHAAVGILTARGGMTSHAAVVARGWGKCCVSGCSSVRVNDASKIVVIEDKALHEGEWLSLNGSTGEVIIGKQPLCPPALSGDLETFMSWVDEVRKLKVMANADTPEDATTARQNGAEGIGLCRTEHMFFASDERIKAVRQMIMASSLELRQKALDRLLPYQRSDFEGIFRAMDGLPVTIRLLDPPLHEFLPEGHVEDMVRELCSETGAAQDDVLARVEKLSEVNPMLGFRGCRLGISYPELTEMQARAIFEAAITMTNQGIQVFPEIMVPLVGTPQELGHQVDVIRQIANKVFTDMGKTIGYKVGTMIEIPRAALVADEIAEQAEFFSFGTNDLTQMTFGYSRDDVGKFLPIYLSQGILQHDPFEVLDQRGVGELVKLATERGRKARPNLKVGICGEHGGEPLSVAFFAKAGLDYVSCSPFRVPIARLAAAQVLL</sequence>
<feature type="transit peptide" description="Chloroplast" evidence="3">
    <location>
        <begin position="1"/>
        <end position="71"/>
    </location>
</feature>
<feature type="chain" id="PRO_5000140166" description="Pyruvate, phosphate dikinase 1, chloroplastic">
    <location>
        <begin position="72"/>
        <end position="947"/>
    </location>
</feature>
<feature type="region of interest" description="Disordered" evidence="4">
    <location>
        <begin position="39"/>
        <end position="60"/>
    </location>
</feature>
<feature type="active site" description="Tele-phosphohistidine intermediate" evidence="2">
    <location>
        <position position="529"/>
    </location>
</feature>
<feature type="active site" description="Proton donor" evidence="2">
    <location>
        <position position="907"/>
    </location>
</feature>
<feature type="binding site" evidence="2">
    <location>
        <position position="635"/>
    </location>
    <ligand>
        <name>substrate</name>
    </ligand>
</feature>
<feature type="binding site" evidence="2">
    <location>
        <position position="692"/>
    </location>
    <ligand>
        <name>substrate</name>
    </ligand>
</feature>
<feature type="binding site" evidence="2">
    <location>
        <position position="821"/>
    </location>
    <ligand>
        <name>Mg(2+)</name>
        <dbReference type="ChEBI" id="CHEBI:18420"/>
    </ligand>
</feature>
<feature type="binding site" evidence="2">
    <location>
        <position position="821"/>
    </location>
    <ligand>
        <name>substrate</name>
    </ligand>
</feature>
<feature type="binding site" evidence="2">
    <location>
        <position position="842"/>
    </location>
    <ligand>
        <name>substrate</name>
    </ligand>
</feature>
<feature type="binding site" evidence="2">
    <location>
        <position position="843"/>
    </location>
    <ligand>
        <name>substrate</name>
    </ligand>
</feature>
<feature type="binding site" evidence="2">
    <location>
        <position position="844"/>
    </location>
    <ligand>
        <name>substrate</name>
    </ligand>
</feature>
<feature type="binding site" evidence="2">
    <location>
        <position position="845"/>
    </location>
    <ligand>
        <name>Mg(2+)</name>
        <dbReference type="ChEBI" id="CHEBI:18420"/>
    </ligand>
</feature>
<feature type="binding site" evidence="2">
    <location>
        <position position="845"/>
    </location>
    <ligand>
        <name>substrate</name>
    </ligand>
</feature>
<feature type="modified residue" description="Phosphothreonine; by PDRP1" evidence="2">
    <location>
        <position position="527"/>
    </location>
</feature>
<feature type="splice variant" id="VSP_034611" description="In isoform 2." evidence="9 10">
    <location>
        <begin position="1"/>
        <end position="65"/>
    </location>
</feature>
<feature type="splice variant" id="VSP_034612" description="In isoform 2." evidence="9 10">
    <original>VAAPIPTTKK</original>
    <variation>MAPAQCARVQ</variation>
    <location>
        <begin position="66"/>
        <end position="75"/>
    </location>
</feature>
<feature type="sequence conflict" description="In Ref. 1; BAA22420/BAA22419." evidence="11" ref="1">
    <original>V</original>
    <variation>L</variation>
    <location>
        <position position="425"/>
    </location>
</feature>
<feature type="sequence conflict" description="In Ref. 7; AK101783." evidence="11" ref="7">
    <original>G</original>
    <variation>D</variation>
    <location>
        <position position="740"/>
    </location>
</feature>
<proteinExistence type="evidence at protein level"/>
<comment type="function">
    <text evidence="6 7 8">Formation of phosphoenolpyruvate. The cytoplasmic isoform supports the biosynthetic processes in the nascent endosperm and provides an efficient mechanism for glycolytic ATP synthesis in oxygen depleted tissues. May be involved in regulating the flux of carbon into starch and fatty acids of seeds and in the remobilization of nitrogen reserves in senescing leaves.</text>
</comment>
<comment type="catalytic activity">
    <reaction>
        <text>pyruvate + phosphate + ATP = phosphoenolpyruvate + AMP + diphosphate + H(+)</text>
        <dbReference type="Rhea" id="RHEA:10756"/>
        <dbReference type="ChEBI" id="CHEBI:15361"/>
        <dbReference type="ChEBI" id="CHEBI:15378"/>
        <dbReference type="ChEBI" id="CHEBI:30616"/>
        <dbReference type="ChEBI" id="CHEBI:33019"/>
        <dbReference type="ChEBI" id="CHEBI:43474"/>
        <dbReference type="ChEBI" id="CHEBI:58702"/>
        <dbReference type="ChEBI" id="CHEBI:456215"/>
        <dbReference type="EC" id="2.7.9.1"/>
    </reaction>
</comment>
<comment type="cofactor">
    <cofactor evidence="2">
        <name>Mg(2+)</name>
        <dbReference type="ChEBI" id="CHEBI:18420"/>
    </cofactor>
</comment>
<comment type="activity regulation">
    <text evidence="5">Activated by light-induced dephosphorylation. Inhibited by dark-induced phosphorylation. Both reactions are catalyzed by PDRP1.</text>
</comment>
<comment type="subunit">
    <text evidence="1">Homotetramer.</text>
</comment>
<comment type="subcellular location">
    <subcellularLocation>
        <location evidence="8">Plastid</location>
        <location evidence="8">Chloroplast</location>
    </subcellularLocation>
    <subcellularLocation>
        <location evidence="8">Cytoplasm</location>
    </subcellularLocation>
    <text>Isoform 1 is targeted to the chloroplast while isoform 2 is found in the cytoplasm.</text>
</comment>
<comment type="alternative products">
    <event type="alternative promoter"/>
    <isoform>
        <id>Q6AVA8-1</id>
        <name>1</name>
        <sequence type="displayed"/>
    </isoform>
    <isoform>
        <id>Q6AVA8-2</id>
        <name>2</name>
        <sequence type="described" ref="VSP_034611 VSP_034612"/>
    </isoform>
</comment>
<comment type="tissue specificity">
    <text evidence="7 8">Isoform 1 is only expressed in green leaves. Isoform 2 is found in roots, stems, rachis branches, leaf sheaths, green leaves and spikelets. The non-phosphorylated PPDK in mature seeds is endosperm-localized.</text>
</comment>
<comment type="developmental stage">
    <text evidence="6 7 8">Massively expressed in 10 days post-pollination seeds and then shows a steep decline as seed maturation proceeds.</text>
</comment>
<comment type="induction">
    <text evidence="8">By light.</text>
</comment>
<comment type="domain">
    <text>The N-terminal domain contains the ATP/Pi binding site, the central domain the pyrophosphate/phosphate carrier histidine, and the C-terminal domain the pyruvate binding site.</text>
</comment>
<comment type="PTM">
    <text evidence="5 7">Phosphorylation of Thr-527 in the dark inactivates the enzyme. Dephosphorylation upon light stimulation reactivates the enzyme. Phosphorylation increases during the first 20 days post-pollination and then remains constant through the 40-day mature seed stage. Reactivation by dephosphorylation during germination is negligible.</text>
</comment>
<comment type="disruption phenotype">
    <text evidence="6">Plants have a floury-white endosperm.</text>
</comment>
<comment type="miscellaneous">
    <text evidence="1">The reaction takes place in three steps, mediated by a phosphocarrier histidine residue located on the surface of the central domain. The two first partial reactions are catalyzed at an active site located on the N-terminal domain, and the third partial reaction is catalyzed at an active site located on the C-terminal domain. For catalytic turnover, the central domain swivels from the concave surface of the N-terminal domain to that of the C-terminal domain (By similarity).</text>
</comment>
<comment type="miscellaneous">
    <text>A second gene codes only for the short cytoplasmic isoform of PPDK.</text>
</comment>
<comment type="miscellaneous">
    <molecule>Isoform 2</molecule>
    <text evidence="11">Produced by alternative promoter usage. Cytoplasmic.</text>
</comment>
<comment type="similarity">
    <text evidence="11">Belongs to the PEP-utilizing enzyme family.</text>
</comment>
<gene>
    <name type="primary">PPDK1</name>
    <name type="synonym">CPDK1</name>
    <name type="synonym">PPDKB</name>
    <name type="ordered locus">Os05g0405000</name>
    <name type="ordered locus">LOC_Os05g33570</name>
    <name type="ORF">OJ1174_H11.5</name>
    <name type="ORF">OsJ_017742</name>
</gene>
<accession>Q6AVA8</accession>
<accession>A3B3X0</accession>
<accession>B7EEB8</accession>
<accession>O24612</accession>
<accession>Q7DN52</accession>
<protein>
    <recommendedName>
        <fullName>Pyruvate, phosphate dikinase 1, chloroplastic</fullName>
        <ecNumber>2.7.9.1</ecNumber>
    </recommendedName>
    <alternativeName>
        <fullName>OsPPDKB</fullName>
    </alternativeName>
    <alternativeName>
        <fullName>Pyruvate, orthophosphate dikinase 1</fullName>
    </alternativeName>
</protein>
<name>PPDK1_ORYSJ</name>
<evidence type="ECO:0000250" key="1"/>
<evidence type="ECO:0000250" key="2">
    <source>
        <dbReference type="UniProtKB" id="P11155"/>
    </source>
</evidence>
<evidence type="ECO:0000255" key="3"/>
<evidence type="ECO:0000256" key="4">
    <source>
        <dbReference type="SAM" id="MobiDB-lite"/>
    </source>
</evidence>
<evidence type="ECO:0000269" key="5">
    <source>
    </source>
</evidence>
<evidence type="ECO:0000269" key="6">
    <source>
    </source>
</evidence>
<evidence type="ECO:0000269" key="7">
    <source>
    </source>
</evidence>
<evidence type="ECO:0000269" key="8">
    <source>
    </source>
</evidence>
<evidence type="ECO:0000303" key="9">
    <source>
    </source>
</evidence>
<evidence type="ECO:0000303" key="10">
    <source>
    </source>
</evidence>
<evidence type="ECO:0000305" key="11"/>
<reference key="1">
    <citation type="journal article" date="1997" name="Plant Mol. Biol.">
        <title>Characterization of the gene for pyruvate,orthophosphate dikinase from rice, a C3 plant, and a comparison of structure and expression between C3 and C4 genes for this protein.</title>
        <authorList>
            <person name="Imaizumi N."/>
            <person name="Ku M.S.B."/>
            <person name="Ishihara K."/>
            <person name="Samejima M."/>
            <person name="Kaneko S."/>
            <person name="Matsuoka M."/>
        </authorList>
    </citation>
    <scope>NUCLEOTIDE SEQUENCE [GENOMIC DNA / MRNA] (ISOFORMS 1 AND 2)</scope>
    <scope>ALTERNATIVE PROMOTER USAGE</scope>
    <scope>FUNCTION</scope>
    <scope>TISSUE SPECIFICITY</scope>
    <scope>SUBCELLULAR LOCATION</scope>
    <scope>DEVELOPMENTAL STAGE</scope>
    <scope>INDUCTION</scope>
    <source>
        <strain>cv. Nipponbare</strain>
    </source>
</reference>
<reference key="2">
    <citation type="journal article" date="2005" name="Mol. Genet. Genomics">
        <title>A fine physical map of the rice chromosome 5.</title>
        <authorList>
            <person name="Cheng C.-H."/>
            <person name="Chung M.C."/>
            <person name="Liu S.-M."/>
            <person name="Chen S.-K."/>
            <person name="Kao F.Y."/>
            <person name="Lin S.-J."/>
            <person name="Hsiao S.-H."/>
            <person name="Tseng I.C."/>
            <person name="Hsing Y.-I.C."/>
            <person name="Wu H.-P."/>
            <person name="Chen C.-S."/>
            <person name="Shaw J.-F."/>
            <person name="Wu J."/>
            <person name="Matsumoto T."/>
            <person name="Sasaki T."/>
            <person name="Chen H.-C."/>
            <person name="Chow T.-Y."/>
        </authorList>
    </citation>
    <scope>NUCLEOTIDE SEQUENCE [LARGE SCALE GENOMIC DNA]</scope>
    <source>
        <strain>cv. Nipponbare</strain>
    </source>
</reference>
<reference key="3">
    <citation type="journal article" date="2005" name="Nature">
        <title>The map-based sequence of the rice genome.</title>
        <authorList>
            <consortium name="International rice genome sequencing project (IRGSP)"/>
        </authorList>
    </citation>
    <scope>NUCLEOTIDE SEQUENCE [LARGE SCALE GENOMIC DNA]</scope>
    <source>
        <strain>cv. Nipponbare</strain>
    </source>
</reference>
<reference key="4">
    <citation type="journal article" date="2008" name="Nucleic Acids Res.">
        <title>The rice annotation project database (RAP-DB): 2008 update.</title>
        <authorList>
            <consortium name="The rice annotation project (RAP)"/>
        </authorList>
    </citation>
    <scope>GENOME REANNOTATION</scope>
    <source>
        <strain>cv. Nipponbare</strain>
    </source>
</reference>
<reference key="5">
    <citation type="journal article" date="2013" name="Rice">
        <title>Improvement of the Oryza sativa Nipponbare reference genome using next generation sequence and optical map data.</title>
        <authorList>
            <person name="Kawahara Y."/>
            <person name="de la Bastide M."/>
            <person name="Hamilton J.P."/>
            <person name="Kanamori H."/>
            <person name="McCombie W.R."/>
            <person name="Ouyang S."/>
            <person name="Schwartz D.C."/>
            <person name="Tanaka T."/>
            <person name="Wu J."/>
            <person name="Zhou S."/>
            <person name="Childs K.L."/>
            <person name="Davidson R.M."/>
            <person name="Lin H."/>
            <person name="Quesada-Ocampo L."/>
            <person name="Vaillancourt B."/>
            <person name="Sakai H."/>
            <person name="Lee S.S."/>
            <person name="Kim J."/>
            <person name="Numa H."/>
            <person name="Itoh T."/>
            <person name="Buell C.R."/>
            <person name="Matsumoto T."/>
        </authorList>
    </citation>
    <scope>GENOME REANNOTATION</scope>
    <source>
        <strain>cv. Nipponbare</strain>
    </source>
</reference>
<reference key="6">
    <citation type="journal article" date="2005" name="PLoS Biol.">
        <title>The genomes of Oryza sativa: a history of duplications.</title>
        <authorList>
            <person name="Yu J."/>
            <person name="Wang J."/>
            <person name="Lin W."/>
            <person name="Li S."/>
            <person name="Li H."/>
            <person name="Zhou J."/>
            <person name="Ni P."/>
            <person name="Dong W."/>
            <person name="Hu S."/>
            <person name="Zeng C."/>
            <person name="Zhang J."/>
            <person name="Zhang Y."/>
            <person name="Li R."/>
            <person name="Xu Z."/>
            <person name="Li S."/>
            <person name="Li X."/>
            <person name="Zheng H."/>
            <person name="Cong L."/>
            <person name="Lin L."/>
            <person name="Yin J."/>
            <person name="Geng J."/>
            <person name="Li G."/>
            <person name="Shi J."/>
            <person name="Liu J."/>
            <person name="Lv H."/>
            <person name="Li J."/>
            <person name="Wang J."/>
            <person name="Deng Y."/>
            <person name="Ran L."/>
            <person name="Shi X."/>
            <person name="Wang X."/>
            <person name="Wu Q."/>
            <person name="Li C."/>
            <person name="Ren X."/>
            <person name="Wang J."/>
            <person name="Wang X."/>
            <person name="Li D."/>
            <person name="Liu D."/>
            <person name="Zhang X."/>
            <person name="Ji Z."/>
            <person name="Zhao W."/>
            <person name="Sun Y."/>
            <person name="Zhang Z."/>
            <person name="Bao J."/>
            <person name="Han Y."/>
            <person name="Dong L."/>
            <person name="Ji J."/>
            <person name="Chen P."/>
            <person name="Wu S."/>
            <person name="Liu J."/>
            <person name="Xiao Y."/>
            <person name="Bu D."/>
            <person name="Tan J."/>
            <person name="Yang L."/>
            <person name="Ye C."/>
            <person name="Zhang J."/>
            <person name="Xu J."/>
            <person name="Zhou Y."/>
            <person name="Yu Y."/>
            <person name="Zhang B."/>
            <person name="Zhuang S."/>
            <person name="Wei H."/>
            <person name="Liu B."/>
            <person name="Lei M."/>
            <person name="Yu H."/>
            <person name="Li Y."/>
            <person name="Xu H."/>
            <person name="Wei S."/>
            <person name="He X."/>
            <person name="Fang L."/>
            <person name="Zhang Z."/>
            <person name="Zhang Y."/>
            <person name="Huang X."/>
            <person name="Su Z."/>
            <person name="Tong W."/>
            <person name="Li J."/>
            <person name="Tong Z."/>
            <person name="Li S."/>
            <person name="Ye J."/>
            <person name="Wang L."/>
            <person name="Fang L."/>
            <person name="Lei T."/>
            <person name="Chen C.-S."/>
            <person name="Chen H.-C."/>
            <person name="Xu Z."/>
            <person name="Li H."/>
            <person name="Huang H."/>
            <person name="Zhang F."/>
            <person name="Xu H."/>
            <person name="Li N."/>
            <person name="Zhao C."/>
            <person name="Li S."/>
            <person name="Dong L."/>
            <person name="Huang Y."/>
            <person name="Li L."/>
            <person name="Xi Y."/>
            <person name="Qi Q."/>
            <person name="Li W."/>
            <person name="Zhang B."/>
            <person name="Hu W."/>
            <person name="Zhang Y."/>
            <person name="Tian X."/>
            <person name="Jiao Y."/>
            <person name="Liang X."/>
            <person name="Jin J."/>
            <person name="Gao L."/>
            <person name="Zheng W."/>
            <person name="Hao B."/>
            <person name="Liu S.-M."/>
            <person name="Wang W."/>
            <person name="Yuan L."/>
            <person name="Cao M."/>
            <person name="McDermott J."/>
            <person name="Samudrala R."/>
            <person name="Wang J."/>
            <person name="Wong G.K.-S."/>
            <person name="Yang H."/>
        </authorList>
    </citation>
    <scope>NUCLEOTIDE SEQUENCE [LARGE SCALE GENOMIC DNA]</scope>
    <source>
        <strain>cv. Nipponbare</strain>
    </source>
</reference>
<reference key="7">
    <citation type="journal article" date="2003" name="Science">
        <title>Collection, mapping, and annotation of over 28,000 cDNA clones from japonica rice.</title>
        <authorList>
            <consortium name="The rice full-length cDNA consortium"/>
        </authorList>
    </citation>
    <scope>NUCLEOTIDE SEQUENCE [LARGE SCALE MRNA] (ISOFORM 2)</scope>
    <source>
        <strain>cv. Nipponbare</strain>
    </source>
</reference>
<reference key="8">
    <citation type="journal article" date="2002" name="Plant Physiol.">
        <title>Pyruvate,orthophosphate dikinase in leaves and chloroplasts of C(3) plants undergoes light-/dark-induced reversible phosphorylation.</title>
        <authorList>
            <person name="Chastain C.J."/>
            <person name="Fries J.P."/>
            <person name="Vogel J.A."/>
            <person name="Randklev C.L."/>
            <person name="Vossen A.P."/>
            <person name="Dittmer S.K."/>
            <person name="Watkins E.E."/>
            <person name="Fiedler L.J."/>
            <person name="Wacker S.A."/>
            <person name="Meinhover K.C."/>
            <person name="Sarath G."/>
            <person name="Chollet R."/>
        </authorList>
    </citation>
    <scope>PHOSPHORYLATION</scope>
    <scope>ACTIVITY REGULATION</scope>
</reference>
<reference key="9">
    <citation type="journal article" date="2005" name="Plant J.">
        <title>White-core endosperm floury endosperm-4 in rice is generated by knockout mutations in the C-type pyruvate orthophosphate dikinase gene (OsPPDKB).</title>
        <authorList>
            <person name="Kang H.-G."/>
            <person name="Park S."/>
            <person name="Matsuoka M."/>
            <person name="An G."/>
        </authorList>
    </citation>
    <scope>FUNCTION</scope>
    <scope>DEVELOPMENTAL STAGE</scope>
    <scope>DISRUPTION PHENOTYPE</scope>
</reference>
<reference key="10">
    <citation type="journal article" date="2006" name="Planta">
        <title>Posttranslational regulation of pyruvate, orthophosphate dikinase in developing rice (Oryza sativa) seeds.</title>
        <authorList>
            <person name="Chastain C.J."/>
            <person name="Heck J.W."/>
            <person name="Colquhoun T.A."/>
            <person name="Voge D.G."/>
            <person name="Gu X.-Y."/>
        </authorList>
    </citation>
    <scope>FUNCTION</scope>
    <scope>TISSUE SPECIFICITY</scope>
    <scope>PHOSPHORYLATION</scope>
    <scope>DEVELOPMENTAL STAGE</scope>
</reference>
<organism>
    <name type="scientific">Oryza sativa subsp. japonica</name>
    <name type="common">Rice</name>
    <dbReference type="NCBI Taxonomy" id="39947"/>
    <lineage>
        <taxon>Eukaryota</taxon>
        <taxon>Viridiplantae</taxon>
        <taxon>Streptophyta</taxon>
        <taxon>Embryophyta</taxon>
        <taxon>Tracheophyta</taxon>
        <taxon>Spermatophyta</taxon>
        <taxon>Magnoliopsida</taxon>
        <taxon>Liliopsida</taxon>
        <taxon>Poales</taxon>
        <taxon>Poaceae</taxon>
        <taxon>BOP clade</taxon>
        <taxon>Oryzoideae</taxon>
        <taxon>Oryzeae</taxon>
        <taxon>Oryzinae</taxon>
        <taxon>Oryza</taxon>
        <taxon>Oryza sativa</taxon>
    </lineage>
</organism>
<dbReference type="EC" id="2.7.9.1"/>
<dbReference type="EMBL" id="D87745">
    <property type="protein sequence ID" value="BAA22419.1"/>
    <property type="molecule type" value="mRNA"/>
</dbReference>
<dbReference type="EMBL" id="D87952">
    <property type="protein sequence ID" value="BAA22420.1"/>
    <property type="molecule type" value="Genomic_DNA"/>
</dbReference>
<dbReference type="EMBL" id="AC104708">
    <property type="protein sequence ID" value="AAT85082.1"/>
    <property type="molecule type" value="Genomic_DNA"/>
</dbReference>
<dbReference type="EMBL" id="AP008211">
    <property type="protein sequence ID" value="BAF17421.1"/>
    <property type="molecule type" value="Genomic_DNA"/>
</dbReference>
<dbReference type="EMBL" id="AP014961">
    <property type="protein sequence ID" value="BAS93945.1"/>
    <property type="molecule type" value="Genomic_DNA"/>
</dbReference>
<dbReference type="EMBL" id="AP014961">
    <property type="protein sequence ID" value="BAS93946.1"/>
    <property type="molecule type" value="Genomic_DNA"/>
</dbReference>
<dbReference type="EMBL" id="CM000142">
    <property type="status" value="NOT_ANNOTATED_CDS"/>
    <property type="molecule type" value="Genomic_DNA"/>
</dbReference>
<dbReference type="EMBL" id="AK068025">
    <property type="protein sequence ID" value="BAG90715.1"/>
    <property type="molecule type" value="mRNA"/>
</dbReference>
<dbReference type="EMBL" id="AK101783">
    <property type="status" value="NOT_ANNOTATED_CDS"/>
    <property type="molecule type" value="mRNA"/>
</dbReference>
<dbReference type="PIR" id="T02979">
    <property type="entry name" value="T02979"/>
</dbReference>
<dbReference type="RefSeq" id="XP_015639324.1">
    <property type="nucleotide sequence ID" value="XM_015783838.1"/>
</dbReference>
<dbReference type="SMR" id="Q6AVA8"/>
<dbReference type="FunCoup" id="Q6AVA8">
    <property type="interactions" value="398"/>
</dbReference>
<dbReference type="IntAct" id="Q6AVA8">
    <property type="interactions" value="1"/>
</dbReference>
<dbReference type="STRING" id="39947.Q6AVA8"/>
<dbReference type="PaxDb" id="39947-Q6AVA8"/>
<dbReference type="EnsemblPlants" id="Os05t0405000-01">
    <molecule id="Q6AVA8-1"/>
    <property type="protein sequence ID" value="Os05t0405000-01"/>
    <property type="gene ID" value="Os05g0405000"/>
</dbReference>
<dbReference type="Gramene" id="Os05t0405000-01">
    <molecule id="Q6AVA8-1"/>
    <property type="protein sequence ID" value="Os05t0405000-01"/>
    <property type="gene ID" value="Os05g0405000"/>
</dbReference>
<dbReference type="KEGG" id="dosa:Os05g0405000"/>
<dbReference type="eggNOG" id="ENOG502QREJ">
    <property type="taxonomic scope" value="Eukaryota"/>
</dbReference>
<dbReference type="InParanoid" id="Q6AVA8"/>
<dbReference type="OMA" id="HFFHEVG"/>
<dbReference type="OrthoDB" id="6123450at2759"/>
<dbReference type="BRENDA" id="2.7.9.1">
    <property type="organism ID" value="8948"/>
</dbReference>
<dbReference type="Proteomes" id="UP000000763">
    <property type="component" value="Chromosome 5"/>
</dbReference>
<dbReference type="Proteomes" id="UP000007752">
    <property type="component" value="Chromosome 5"/>
</dbReference>
<dbReference type="Proteomes" id="UP000059680">
    <property type="component" value="Chromosome 5"/>
</dbReference>
<dbReference type="GO" id="GO:0009507">
    <property type="term" value="C:chloroplast"/>
    <property type="evidence" value="ECO:0007669"/>
    <property type="project" value="UniProtKB-SubCell"/>
</dbReference>
<dbReference type="GO" id="GO:0005829">
    <property type="term" value="C:cytosol"/>
    <property type="evidence" value="ECO:0007669"/>
    <property type="project" value="EnsemblPlants"/>
</dbReference>
<dbReference type="GO" id="GO:0005524">
    <property type="term" value="F:ATP binding"/>
    <property type="evidence" value="ECO:0007669"/>
    <property type="project" value="UniProtKB-KW"/>
</dbReference>
<dbReference type="GO" id="GO:0016301">
    <property type="term" value="F:kinase activity"/>
    <property type="evidence" value="ECO:0007669"/>
    <property type="project" value="UniProtKB-KW"/>
</dbReference>
<dbReference type="GO" id="GO:0046872">
    <property type="term" value="F:metal ion binding"/>
    <property type="evidence" value="ECO:0007669"/>
    <property type="project" value="UniProtKB-KW"/>
</dbReference>
<dbReference type="GO" id="GO:0050242">
    <property type="term" value="F:pyruvate, phosphate dikinase activity"/>
    <property type="evidence" value="ECO:0007669"/>
    <property type="project" value="UniProtKB-EC"/>
</dbReference>
<dbReference type="GO" id="GO:0015979">
    <property type="term" value="P:photosynthesis"/>
    <property type="evidence" value="ECO:0007669"/>
    <property type="project" value="UniProtKB-KW"/>
</dbReference>
<dbReference type="FunFam" id="3.20.20.60:FF:000040">
    <property type="entry name" value="Pyruvate, phosphate dikinase, chloroplastic"/>
    <property type="match status" value="1"/>
</dbReference>
<dbReference type="FunFam" id="3.30.470.20:FF:000038">
    <property type="entry name" value="Pyruvate, phosphate dikinase, chloroplastic"/>
    <property type="match status" value="1"/>
</dbReference>
<dbReference type="FunFam" id="3.50.30.10:FF:000009">
    <property type="entry name" value="Pyruvate, phosphate dikinase, chloroplastic"/>
    <property type="match status" value="1"/>
</dbReference>
<dbReference type="Gene3D" id="1.20.80.30">
    <property type="match status" value="1"/>
</dbReference>
<dbReference type="Gene3D" id="3.30.1490.20">
    <property type="entry name" value="ATP-grasp fold, A domain"/>
    <property type="match status" value="1"/>
</dbReference>
<dbReference type="Gene3D" id="3.30.470.20">
    <property type="entry name" value="ATP-grasp fold, B domain"/>
    <property type="match status" value="1"/>
</dbReference>
<dbReference type="Gene3D" id="3.20.20.60">
    <property type="entry name" value="Phosphoenolpyruvate-binding domains"/>
    <property type="match status" value="1"/>
</dbReference>
<dbReference type="Gene3D" id="3.50.30.10">
    <property type="entry name" value="Phosphohistidine domain"/>
    <property type="match status" value="1"/>
</dbReference>
<dbReference type="Gene3D" id="1.10.189.10">
    <property type="entry name" value="Pyruvate Phosphate Dikinase, domain 2"/>
    <property type="match status" value="1"/>
</dbReference>
<dbReference type="InterPro" id="IPR013815">
    <property type="entry name" value="ATP_grasp_subdomain_1"/>
</dbReference>
<dbReference type="InterPro" id="IPR008279">
    <property type="entry name" value="PEP-util_enz_mobile_dom"/>
</dbReference>
<dbReference type="InterPro" id="IPR018274">
    <property type="entry name" value="PEP_util_AS"/>
</dbReference>
<dbReference type="InterPro" id="IPR000121">
    <property type="entry name" value="PEP_util_C"/>
</dbReference>
<dbReference type="InterPro" id="IPR023151">
    <property type="entry name" value="PEP_util_CS"/>
</dbReference>
<dbReference type="InterPro" id="IPR036637">
    <property type="entry name" value="Phosphohistidine_dom_sf"/>
</dbReference>
<dbReference type="InterPro" id="IPR002192">
    <property type="entry name" value="PPDK_AMP/ATP-bd"/>
</dbReference>
<dbReference type="InterPro" id="IPR010121">
    <property type="entry name" value="Pyruvate_phosphate_dikinase"/>
</dbReference>
<dbReference type="InterPro" id="IPR015813">
    <property type="entry name" value="Pyrv/PenolPyrv_kinase-like_dom"/>
</dbReference>
<dbReference type="InterPro" id="IPR040442">
    <property type="entry name" value="Pyrv_kinase-like_dom_sf"/>
</dbReference>
<dbReference type="NCBIfam" id="NF004531">
    <property type="entry name" value="PRK05878.1"/>
    <property type="match status" value="1"/>
</dbReference>
<dbReference type="NCBIfam" id="TIGR01828">
    <property type="entry name" value="pyru_phos_dikin"/>
    <property type="match status" value="1"/>
</dbReference>
<dbReference type="PANTHER" id="PTHR22931">
    <property type="entry name" value="PHOSPHOENOLPYRUVATE DIKINASE-RELATED"/>
    <property type="match status" value="1"/>
</dbReference>
<dbReference type="PANTHER" id="PTHR22931:SF9">
    <property type="entry name" value="PYRUVATE, PHOSPHATE DIKINASE 1, CHLOROPLASTIC"/>
    <property type="match status" value="1"/>
</dbReference>
<dbReference type="Pfam" id="PF00391">
    <property type="entry name" value="PEP-utilizers"/>
    <property type="match status" value="1"/>
</dbReference>
<dbReference type="Pfam" id="PF02896">
    <property type="entry name" value="PEP-utilizers_C"/>
    <property type="match status" value="1"/>
</dbReference>
<dbReference type="Pfam" id="PF01326">
    <property type="entry name" value="PPDK_N"/>
    <property type="match status" value="3"/>
</dbReference>
<dbReference type="PIRSF" id="PIRSF000853">
    <property type="entry name" value="PPDK"/>
    <property type="match status" value="1"/>
</dbReference>
<dbReference type="SUPFAM" id="SSF56059">
    <property type="entry name" value="Glutathione synthetase ATP-binding domain-like"/>
    <property type="match status" value="1"/>
</dbReference>
<dbReference type="SUPFAM" id="SSF51621">
    <property type="entry name" value="Phosphoenolpyruvate/pyruvate domain"/>
    <property type="match status" value="1"/>
</dbReference>
<dbReference type="SUPFAM" id="SSF52009">
    <property type="entry name" value="Phosphohistidine domain"/>
    <property type="match status" value="1"/>
</dbReference>
<dbReference type="PROSITE" id="PS00742">
    <property type="entry name" value="PEP_ENZYMES_2"/>
    <property type="match status" value="1"/>
</dbReference>
<dbReference type="PROSITE" id="PS00370">
    <property type="entry name" value="PEP_ENZYMES_PHOS_SITE"/>
    <property type="match status" value="1"/>
</dbReference>
<keyword id="KW-0877">Alternative promoter usage</keyword>
<keyword id="KW-0067">ATP-binding</keyword>
<keyword id="KW-0150">Chloroplast</keyword>
<keyword id="KW-0963">Cytoplasm</keyword>
<keyword id="KW-0418">Kinase</keyword>
<keyword id="KW-0460">Magnesium</keyword>
<keyword id="KW-0479">Metal-binding</keyword>
<keyword id="KW-0547">Nucleotide-binding</keyword>
<keyword id="KW-0597">Phosphoprotein</keyword>
<keyword id="KW-0602">Photosynthesis</keyword>
<keyword id="KW-0934">Plastid</keyword>
<keyword id="KW-0670">Pyruvate</keyword>
<keyword id="KW-1185">Reference proteome</keyword>
<keyword id="KW-0808">Transferase</keyword>
<keyword id="KW-0809">Transit peptide</keyword>